<gene>
    <name type="primary">apcE</name>
    <name type="ordered locus">alr0020</name>
</gene>
<dbReference type="EC" id="4.-.-.-"/>
<dbReference type="EMBL" id="U96137">
    <property type="protein sequence ID" value="AAC97589.1"/>
    <property type="molecule type" value="Genomic_DNA"/>
</dbReference>
<dbReference type="EMBL" id="BA000019">
    <property type="protein sequence ID" value="BAB77544.1"/>
    <property type="molecule type" value="Genomic_DNA"/>
</dbReference>
<dbReference type="PIR" id="AD1809">
    <property type="entry name" value="AD1809"/>
</dbReference>
<dbReference type="RefSeq" id="WP_010994197.1">
    <property type="nucleotide sequence ID" value="NZ_RSCN01000016.1"/>
</dbReference>
<dbReference type="PDB" id="2KY4">
    <property type="method" value="NMR"/>
    <property type="chains" value="A=727-867"/>
</dbReference>
<dbReference type="PDB" id="4XXI">
    <property type="method" value="X-ray"/>
    <property type="resolution" value="2.20 A"/>
    <property type="chains" value="A/B=20-76, A/B=154-240"/>
</dbReference>
<dbReference type="PDB" id="4XXK">
    <property type="method" value="X-ray"/>
    <property type="resolution" value="2.97 A"/>
    <property type="chains" value="A/B=20-76, A/B=154-240"/>
</dbReference>
<dbReference type="PDB" id="7EYD">
    <property type="method" value="EM"/>
    <property type="resolution" value="3.90 A"/>
    <property type="chains" value="09/19=1-1132"/>
</dbReference>
<dbReference type="PDBsum" id="2KY4"/>
<dbReference type="PDBsum" id="4XXI"/>
<dbReference type="PDBsum" id="4XXK"/>
<dbReference type="PDBsum" id="7EYD"/>
<dbReference type="EMDB" id="EMD-31381"/>
<dbReference type="SMR" id="P80559"/>
<dbReference type="STRING" id="103690.gene:10492024"/>
<dbReference type="KEGG" id="ana:alr0020"/>
<dbReference type="eggNOG" id="COG0237">
    <property type="taxonomic scope" value="Bacteria"/>
</dbReference>
<dbReference type="eggNOG" id="COG0448">
    <property type="taxonomic scope" value="Bacteria"/>
</dbReference>
<dbReference type="OrthoDB" id="499593at2"/>
<dbReference type="EvolutionaryTrace" id="P80559"/>
<dbReference type="Proteomes" id="UP000002483">
    <property type="component" value="Chromosome"/>
</dbReference>
<dbReference type="GO" id="GO:0030089">
    <property type="term" value="C:phycobilisome"/>
    <property type="evidence" value="ECO:0007669"/>
    <property type="project" value="UniProtKB-KW"/>
</dbReference>
<dbReference type="GO" id="GO:0031676">
    <property type="term" value="C:plasma membrane-derived thylakoid membrane"/>
    <property type="evidence" value="ECO:0007669"/>
    <property type="project" value="UniProtKB-SubCell"/>
</dbReference>
<dbReference type="GO" id="GO:0016829">
    <property type="term" value="F:lyase activity"/>
    <property type="evidence" value="ECO:0007669"/>
    <property type="project" value="UniProtKB-KW"/>
</dbReference>
<dbReference type="GO" id="GO:0015979">
    <property type="term" value="P:photosynthesis"/>
    <property type="evidence" value="ECO:0007669"/>
    <property type="project" value="UniProtKB-KW"/>
</dbReference>
<dbReference type="CDD" id="cd12128">
    <property type="entry name" value="PBP_PBS-LCM"/>
    <property type="match status" value="1"/>
</dbReference>
<dbReference type="Gene3D" id="1.10.3130.20">
    <property type="entry name" value="Phycobilisome linker domain"/>
    <property type="match status" value="4"/>
</dbReference>
<dbReference type="Gene3D" id="1.10.490.20">
    <property type="entry name" value="Phycocyanins"/>
    <property type="match status" value="1"/>
</dbReference>
<dbReference type="InterPro" id="IPR009050">
    <property type="entry name" value="Globin-like_sf"/>
</dbReference>
<dbReference type="InterPro" id="IPR001297">
    <property type="entry name" value="PBS_linker_dom"/>
</dbReference>
<dbReference type="InterPro" id="IPR038255">
    <property type="entry name" value="PBS_linker_sf"/>
</dbReference>
<dbReference type="InterPro" id="IPR012128">
    <property type="entry name" value="Phycobilisome_asu/bsu"/>
</dbReference>
<dbReference type="InterPro" id="IPR038719">
    <property type="entry name" value="Phycobilisome_asu/bsu_sf"/>
</dbReference>
<dbReference type="PANTHER" id="PTHR34011:SF6">
    <property type="entry name" value="PHYCOBILIPROTEIN APCE"/>
    <property type="match status" value="1"/>
</dbReference>
<dbReference type="PANTHER" id="PTHR34011">
    <property type="entry name" value="PHYCOBILISOME 32.1 KDA LINKER POLYPEPTIDE, PHYCOCYANIN-ASSOCIATED, ROD 2-RELATED"/>
    <property type="match status" value="1"/>
</dbReference>
<dbReference type="Pfam" id="PF00427">
    <property type="entry name" value="PBS_linker_poly"/>
    <property type="match status" value="4"/>
</dbReference>
<dbReference type="Pfam" id="PF00502">
    <property type="entry name" value="Phycobilisome"/>
    <property type="match status" value="2"/>
</dbReference>
<dbReference type="SUPFAM" id="SSF46458">
    <property type="entry name" value="Globin-like"/>
    <property type="match status" value="1"/>
</dbReference>
<dbReference type="PROSITE" id="PS51445">
    <property type="entry name" value="PBS_LINKER"/>
    <property type="match status" value="4"/>
</dbReference>
<proteinExistence type="evidence at protein level"/>
<organism>
    <name type="scientific">Nostoc sp. (strain PCC 7120 / SAG 25.82 / UTEX 2576)</name>
    <dbReference type="NCBI Taxonomy" id="103690"/>
    <lineage>
        <taxon>Bacteria</taxon>
        <taxon>Bacillati</taxon>
        <taxon>Cyanobacteriota</taxon>
        <taxon>Cyanophyceae</taxon>
        <taxon>Nostocales</taxon>
        <taxon>Nostocaceae</taxon>
        <taxon>Nostoc</taxon>
    </lineage>
</organism>
<keyword id="KW-0002">3D-structure</keyword>
<keyword id="KW-0042">Antenna complex</keyword>
<keyword id="KW-0089">Bile pigment</keyword>
<keyword id="KW-0157">Chromophore</keyword>
<keyword id="KW-0903">Direct protein sequencing</keyword>
<keyword id="KW-0249">Electron transport</keyword>
<keyword id="KW-0456">Lyase</keyword>
<keyword id="KW-0472">Membrane</keyword>
<keyword id="KW-0602">Photosynthesis</keyword>
<keyword id="KW-0605">Phycobilisome</keyword>
<keyword id="KW-1185">Reference proteome</keyword>
<keyword id="KW-0677">Repeat</keyword>
<keyword id="KW-0793">Thylakoid</keyword>
<keyword id="KW-0813">Transport</keyword>
<accession>P80559</accession>
<accession>O05712</accession>
<evidence type="ECO:0000250" key="1"/>
<evidence type="ECO:0000255" key="2">
    <source>
        <dbReference type="PROSITE-ProRule" id="PRU00775"/>
    </source>
</evidence>
<evidence type="ECO:0000269" key="3">
    <source>
    </source>
</evidence>
<evidence type="ECO:0000305" key="4"/>
<evidence type="ECO:0007829" key="5">
    <source>
        <dbReference type="PDB" id="2KY4"/>
    </source>
</evidence>
<evidence type="ECO:0007829" key="6">
    <source>
        <dbReference type="PDB" id="4XXI"/>
    </source>
</evidence>
<sequence length="1132" mass="126888">MSVKASGGSSVARPQLYQTLAVATITQAEQQDRFLGRGELDELASYFASGAKRLEIAQLLTENSEIIVSRAANRIFVGGSPMAFLEKPREPELAMAAVGGGGDVRESMKLGTVTYVETRGGFLENLRSIFNTSPSGPTPPGFRPINIARYGPSNMAKSLRDLSWFLRYATYAIVAGDPNIIVVNTRGLREIIENACSGEATIVALQEIKAASLSYFRKDPEAAEIVSQYMDVLITEFKAPTPSNKLRQRPSGDQQGLQLPQIYFSAAERRPKFVMKTGLSATEKNEVIKAAYRQIFERDITRAYSLSISDLESKVKNGDISMKEFVRRLAKSPLYQKQFYQPFINSRVIELAFRHILGRGPSSREEVQKYFSIISNGGLPALVDALVDSAEYSDYFGEETVPYLRGLGQEAQECRNWGPQQDLFNYSAPFRKVPQFITTFAAYDRPLPDQHPYGSGNDPLEIQFGAIFPKETRNPSTSPAPFGKDTRRILIHQGPGINNQVSNPSARGLAPGSLGPKVFKLDQLPGTIGKKAAKGASVKFSESSTQAVIKATYLQVFGRDVYEGQRLKVQEIKLENGEISVRDFVRALAKSDLFRKLYWTPFYVCKAIEYIHRRLLGRPTYGRQENNKYFDIASKKGLYAVVDAILDSLEYTETFGEDTVPYERYLTPAGVALRQLRVGTIREDVANVEKQETPRFVELGTVKENRTQPDIDFRINQGVTKQREQTKVFKRVAGIKDKAAIKTLISAAYRQIFERDIAPYIAQNEFSGWESKLGNGEITVKEFIEGLGYSNLYLKEFYTPYPNTKVIELGTKHFLGRAPIDQAEIRKYNQILATQGIRAFINALVNSQEYNEVFGEDTVPYRRFPTLPAANFPNTQKLYNQLTKQNNDVVIPSFKPVQARIQSDKTPILAKAIADLAAQAKQMDKSKPLFIELGRSYNDGRGQSVEVGVGTTRRKPARIYRLTNGIGQAEKQLVINAIYRQVLDVFSGQVPDYYRRTELDSKLRNGEISVREFVREIASSEIYRKRFYTPYPNTKVIEFLFRHLLGRAPATQGEIRQYNKLLADNGLRAAVEAIVDSPEYSRYFGEDVVPYPRFPSLPAGNYLGSVQAAADLVKQSWSSLSPSTLTGRPGDR</sequence>
<reference key="1">
    <citation type="submission" date="1997-04" db="EMBL/GenBank/DDBJ databases">
        <title>Characterization of Anabaena sp. PCC 7120 mutants defective in the large core-membrane linker protein of the light-harvesting phycobilisomes.</title>
        <authorList>
            <person name="Cai Y.A."/>
            <person name="Lantoine F.L."/>
            <person name="Glazer A.N."/>
        </authorList>
    </citation>
    <scope>NUCLEOTIDE SEQUENCE [GENOMIC DNA]</scope>
</reference>
<reference key="2">
    <citation type="journal article" date="2001" name="DNA Res.">
        <title>Complete genomic sequence of the filamentous nitrogen-fixing cyanobacterium Anabaena sp. strain PCC 7120.</title>
        <authorList>
            <person name="Kaneko T."/>
            <person name="Nakamura Y."/>
            <person name="Wolk C.P."/>
            <person name="Kuritz T."/>
            <person name="Sasamoto S."/>
            <person name="Watanabe A."/>
            <person name="Iriguchi M."/>
            <person name="Ishikawa A."/>
            <person name="Kawashima K."/>
            <person name="Kimura T."/>
            <person name="Kishida Y."/>
            <person name="Kohara M."/>
            <person name="Matsumoto M."/>
            <person name="Matsuno A."/>
            <person name="Muraki A."/>
            <person name="Nakazaki N."/>
            <person name="Shimpo S."/>
            <person name="Sugimoto M."/>
            <person name="Takazawa M."/>
            <person name="Yamada M."/>
            <person name="Yasuda M."/>
            <person name="Tabata S."/>
        </authorList>
    </citation>
    <scope>NUCLEOTIDE SEQUENCE [LARGE SCALE GENOMIC DNA]</scope>
    <source>
        <strain>PCC 7120 / SAG 25.82 / UTEX 2576</strain>
    </source>
</reference>
<reference key="3">
    <citation type="journal article" date="1996" name="Eur. J. Biochem.">
        <title>Isolation, characterization and electron microscopy analysis of a hemidiscoidal phycobilisome type from the cyanobacterium Anabaena sp. PCC 7120.</title>
        <authorList>
            <person name="Ducret A."/>
            <person name="Sidler W."/>
            <person name="Wehrli E."/>
            <person name="Frank G."/>
            <person name="Zuber H."/>
        </authorList>
    </citation>
    <scope>PROTEIN SEQUENCE OF 2-31</scope>
</reference>
<reference key="4">
    <citation type="submission" date="2010-07" db="PDB data bank">
        <title>Solution NMR structure of the PBS linker domain of phycobilisome linker polypeptide from Anabaena sp. Northeast structural genomics consortium (NESG) target nsr123e.</title>
        <authorList>
            <consortium name="Northeast structural genomics consortium (NESG)"/>
        </authorList>
    </citation>
    <scope>STRUCTURE BY NMR OF 727-867</scope>
</reference>
<comment type="function">
    <text evidence="1">This protein is postulated to act both as terminal energy acceptor (by its phycobilin-like domains) and as a linker polypeptide (by its repeats and arms) that stabilizes the phycobilisome core architecture. Has intrinsic bilin lyase activity (By similarity).</text>
</comment>
<comment type="subunit">
    <text evidence="1">Heterodimer of ApcF (a variant beta-allophycocyanin). Phycobilisomes of this organism are composed of a two cylinder core, from which six rods radiate. The core is mainly composed of allophycocyanin alpha and beta chains and of minor components (By similarity).</text>
</comment>
<comment type="subcellular location">
    <subcellularLocation>
        <location evidence="1">Cellular thylakoid membrane</location>
        <topology evidence="1">Peripheral membrane protein</topology>
        <orientation evidence="1">Cytoplasmic side</orientation>
    </subcellularLocation>
    <text evidence="1">Anchors the phycobilisome perpendicularly to the cytoplasmic surface of the thylakoid membrane.</text>
</comment>
<comment type="PTM">
    <text evidence="1">Contains one covalently linked bilin chromophore. This protein autochromophorylates (By similarity).</text>
</comment>
<comment type="similarity">
    <text evidence="2">Belongs to the phycobilisome linker protein family.</text>
</comment>
<feature type="initiator methionine" description="Removed" evidence="3">
    <location>
        <position position="1"/>
    </location>
</feature>
<feature type="chain" id="PRO_0000199257" description="Phycobiliprotein ApcE">
    <location>
        <begin position="2"/>
        <end position="1132"/>
    </location>
</feature>
<feature type="domain" description="PBS-linker 1" evidence="2">
    <location>
        <begin position="253"/>
        <end position="433"/>
    </location>
</feature>
<feature type="domain" description="PBS-linker 2" evidence="2">
    <location>
        <begin position="514"/>
        <end position="692"/>
    </location>
</feature>
<feature type="domain" description="PBS-linker 3" evidence="2">
    <location>
        <begin position="709"/>
        <end position="887"/>
    </location>
</feature>
<feature type="domain" description="PBS-linker 4" evidence="2">
    <location>
        <begin position="940"/>
        <end position="1121"/>
    </location>
</feature>
<feature type="binding site" description="covalent" evidence="1">
    <location>
        <position position="196"/>
    </location>
    <ligand>
        <name>(2R,3E)-phycocyanobilin</name>
        <dbReference type="ChEBI" id="CHEBI:85275"/>
    </ligand>
</feature>
<feature type="sequence conflict" description="In Ref. 3; AA sequence." evidence="4" ref="3">
    <original>E</original>
    <variation>D</variation>
    <location>
        <position position="29"/>
    </location>
</feature>
<feature type="sequence conflict" description="In Ref. 1; AAC97589." evidence="4" ref="1">
    <original>E</original>
    <variation>D</variation>
    <location>
        <position position="221"/>
    </location>
</feature>
<feature type="helix" evidence="6">
    <location>
        <begin position="21"/>
        <end position="30"/>
    </location>
</feature>
<feature type="helix" evidence="6">
    <location>
        <begin position="37"/>
        <end position="48"/>
    </location>
</feature>
<feature type="helix" evidence="6">
    <location>
        <begin position="50"/>
        <end position="62"/>
    </location>
</feature>
<feature type="helix" evidence="6">
    <location>
        <begin position="64"/>
        <end position="74"/>
    </location>
</feature>
<feature type="helix" evidence="6">
    <location>
        <begin position="155"/>
        <end position="175"/>
    </location>
</feature>
<feature type="helix" evidence="6">
    <location>
        <begin position="179"/>
        <end position="185"/>
    </location>
</feature>
<feature type="helix" evidence="6">
    <location>
        <begin position="188"/>
        <end position="195"/>
    </location>
</feature>
<feature type="helix" evidence="6">
    <location>
        <begin position="198"/>
        <end position="213"/>
    </location>
</feature>
<feature type="helix" evidence="6">
    <location>
        <begin position="214"/>
        <end position="216"/>
    </location>
</feature>
<feature type="helix" evidence="6">
    <location>
        <begin position="220"/>
        <end position="235"/>
    </location>
</feature>
<feature type="helix" evidence="5">
    <location>
        <begin position="738"/>
        <end position="752"/>
    </location>
</feature>
<feature type="helix" evidence="5">
    <location>
        <begin position="759"/>
        <end position="765"/>
    </location>
</feature>
<feature type="helix" evidence="5">
    <location>
        <begin position="767"/>
        <end position="774"/>
    </location>
</feature>
<feature type="helix" evidence="5">
    <location>
        <begin position="780"/>
        <end position="789"/>
    </location>
</feature>
<feature type="helix" evidence="5">
    <location>
        <begin position="791"/>
        <end position="797"/>
    </location>
</feature>
<feature type="strand" evidence="5">
    <location>
        <begin position="799"/>
        <end position="801"/>
    </location>
</feature>
<feature type="helix" evidence="5">
    <location>
        <begin position="803"/>
        <end position="814"/>
    </location>
</feature>
<feature type="helix" evidence="5">
    <location>
        <begin position="822"/>
        <end position="834"/>
    </location>
</feature>
<feature type="helix" evidence="5">
    <location>
        <begin position="837"/>
        <end position="845"/>
    </location>
</feature>
<feature type="helix" evidence="5">
    <location>
        <begin position="848"/>
        <end position="853"/>
    </location>
</feature>
<feature type="strand" evidence="5">
    <location>
        <begin position="856"/>
        <end position="858"/>
    </location>
</feature>
<feature type="turn" evidence="5">
    <location>
        <begin position="864"/>
        <end position="866"/>
    </location>
</feature>
<name>APCE_NOSS1</name>
<protein>
    <recommendedName>
        <fullName>Phycobiliprotein ApcE</fullName>
        <ecNumber>4.-.-.-</ecNumber>
    </recommendedName>
    <alternativeName>
        <fullName>Anchor polypeptide</fullName>
    </alternativeName>
    <alternativeName>
        <fullName>PBS-anchor protein</fullName>
    </alternativeName>
    <alternativeName>
        <fullName>Phycobilisome linker polypeptide</fullName>
    </alternativeName>
</protein>